<evidence type="ECO:0000255" key="1">
    <source>
        <dbReference type="HAMAP-Rule" id="MF_01595"/>
    </source>
</evidence>
<name>PNP_DECAR</name>
<feature type="chain" id="PRO_0000329616" description="Polyribonucleotide nucleotidyltransferase">
    <location>
        <begin position="1"/>
        <end position="715"/>
    </location>
</feature>
<feature type="domain" description="KH" evidence="1">
    <location>
        <begin position="554"/>
        <end position="613"/>
    </location>
</feature>
<feature type="domain" description="S1 motif" evidence="1">
    <location>
        <begin position="623"/>
        <end position="691"/>
    </location>
</feature>
<feature type="binding site" evidence="1">
    <location>
        <position position="487"/>
    </location>
    <ligand>
        <name>Mg(2+)</name>
        <dbReference type="ChEBI" id="CHEBI:18420"/>
    </ligand>
</feature>
<feature type="binding site" evidence="1">
    <location>
        <position position="493"/>
    </location>
    <ligand>
        <name>Mg(2+)</name>
        <dbReference type="ChEBI" id="CHEBI:18420"/>
    </ligand>
</feature>
<dbReference type="EC" id="2.7.7.8" evidence="1"/>
<dbReference type="EMBL" id="CP000089">
    <property type="protein sequence ID" value="AAZ47183.1"/>
    <property type="molecule type" value="Genomic_DNA"/>
</dbReference>
<dbReference type="SMR" id="Q47D98"/>
<dbReference type="STRING" id="159087.Daro_2448"/>
<dbReference type="KEGG" id="dar:Daro_2448"/>
<dbReference type="eggNOG" id="COG1185">
    <property type="taxonomic scope" value="Bacteria"/>
</dbReference>
<dbReference type="HOGENOM" id="CLU_004217_2_2_4"/>
<dbReference type="OrthoDB" id="9804305at2"/>
<dbReference type="GO" id="GO:0005829">
    <property type="term" value="C:cytosol"/>
    <property type="evidence" value="ECO:0007669"/>
    <property type="project" value="TreeGrafter"/>
</dbReference>
<dbReference type="GO" id="GO:0000175">
    <property type="term" value="F:3'-5'-RNA exonuclease activity"/>
    <property type="evidence" value="ECO:0007669"/>
    <property type="project" value="TreeGrafter"/>
</dbReference>
<dbReference type="GO" id="GO:0000287">
    <property type="term" value="F:magnesium ion binding"/>
    <property type="evidence" value="ECO:0007669"/>
    <property type="project" value="UniProtKB-UniRule"/>
</dbReference>
<dbReference type="GO" id="GO:0004654">
    <property type="term" value="F:polyribonucleotide nucleotidyltransferase activity"/>
    <property type="evidence" value="ECO:0007669"/>
    <property type="project" value="UniProtKB-UniRule"/>
</dbReference>
<dbReference type="GO" id="GO:0003723">
    <property type="term" value="F:RNA binding"/>
    <property type="evidence" value="ECO:0007669"/>
    <property type="project" value="UniProtKB-UniRule"/>
</dbReference>
<dbReference type="GO" id="GO:0006402">
    <property type="term" value="P:mRNA catabolic process"/>
    <property type="evidence" value="ECO:0007669"/>
    <property type="project" value="UniProtKB-UniRule"/>
</dbReference>
<dbReference type="GO" id="GO:0006396">
    <property type="term" value="P:RNA processing"/>
    <property type="evidence" value="ECO:0007669"/>
    <property type="project" value="InterPro"/>
</dbReference>
<dbReference type="CDD" id="cd02393">
    <property type="entry name" value="KH-I_PNPase"/>
    <property type="match status" value="1"/>
</dbReference>
<dbReference type="CDD" id="cd11363">
    <property type="entry name" value="RNase_PH_PNPase_1"/>
    <property type="match status" value="1"/>
</dbReference>
<dbReference type="CDD" id="cd11364">
    <property type="entry name" value="RNase_PH_PNPase_2"/>
    <property type="match status" value="1"/>
</dbReference>
<dbReference type="CDD" id="cd04472">
    <property type="entry name" value="S1_PNPase"/>
    <property type="match status" value="1"/>
</dbReference>
<dbReference type="FunFam" id="2.40.50.140:FF:000023">
    <property type="entry name" value="Polyribonucleotide nucleotidyltransferase"/>
    <property type="match status" value="1"/>
</dbReference>
<dbReference type="FunFam" id="3.30.1370.10:FF:000001">
    <property type="entry name" value="Polyribonucleotide nucleotidyltransferase"/>
    <property type="match status" value="1"/>
</dbReference>
<dbReference type="FunFam" id="3.30.230.70:FF:000001">
    <property type="entry name" value="Polyribonucleotide nucleotidyltransferase"/>
    <property type="match status" value="1"/>
</dbReference>
<dbReference type="FunFam" id="3.30.230.70:FF:000002">
    <property type="entry name" value="Polyribonucleotide nucleotidyltransferase"/>
    <property type="match status" value="1"/>
</dbReference>
<dbReference type="Gene3D" id="3.30.230.70">
    <property type="entry name" value="GHMP Kinase, N-terminal domain"/>
    <property type="match status" value="2"/>
</dbReference>
<dbReference type="Gene3D" id="3.30.1370.10">
    <property type="entry name" value="K Homology domain, type 1"/>
    <property type="match status" value="1"/>
</dbReference>
<dbReference type="Gene3D" id="2.40.50.140">
    <property type="entry name" value="Nucleic acid-binding proteins"/>
    <property type="match status" value="1"/>
</dbReference>
<dbReference type="HAMAP" id="MF_01595">
    <property type="entry name" value="PNPase"/>
    <property type="match status" value="1"/>
</dbReference>
<dbReference type="InterPro" id="IPR001247">
    <property type="entry name" value="ExoRNase_PH_dom1"/>
</dbReference>
<dbReference type="InterPro" id="IPR015847">
    <property type="entry name" value="ExoRNase_PH_dom2"/>
</dbReference>
<dbReference type="InterPro" id="IPR036345">
    <property type="entry name" value="ExoRNase_PH_dom2_sf"/>
</dbReference>
<dbReference type="InterPro" id="IPR004087">
    <property type="entry name" value="KH_dom"/>
</dbReference>
<dbReference type="InterPro" id="IPR004088">
    <property type="entry name" value="KH_dom_type_1"/>
</dbReference>
<dbReference type="InterPro" id="IPR036612">
    <property type="entry name" value="KH_dom_type_1_sf"/>
</dbReference>
<dbReference type="InterPro" id="IPR012340">
    <property type="entry name" value="NA-bd_OB-fold"/>
</dbReference>
<dbReference type="InterPro" id="IPR012162">
    <property type="entry name" value="PNPase"/>
</dbReference>
<dbReference type="InterPro" id="IPR027408">
    <property type="entry name" value="PNPase/RNase_PH_dom_sf"/>
</dbReference>
<dbReference type="InterPro" id="IPR015848">
    <property type="entry name" value="PNPase_PH_RNA-bd_bac/org-type"/>
</dbReference>
<dbReference type="InterPro" id="IPR020568">
    <property type="entry name" value="Ribosomal_Su5_D2-typ_SF"/>
</dbReference>
<dbReference type="InterPro" id="IPR003029">
    <property type="entry name" value="S1_domain"/>
</dbReference>
<dbReference type="NCBIfam" id="TIGR03591">
    <property type="entry name" value="polynuc_phos"/>
    <property type="match status" value="1"/>
</dbReference>
<dbReference type="NCBIfam" id="NF008805">
    <property type="entry name" value="PRK11824.1"/>
    <property type="match status" value="1"/>
</dbReference>
<dbReference type="PANTHER" id="PTHR11252">
    <property type="entry name" value="POLYRIBONUCLEOTIDE NUCLEOTIDYLTRANSFERASE"/>
    <property type="match status" value="1"/>
</dbReference>
<dbReference type="PANTHER" id="PTHR11252:SF0">
    <property type="entry name" value="POLYRIBONUCLEOTIDE NUCLEOTIDYLTRANSFERASE 1, MITOCHONDRIAL"/>
    <property type="match status" value="1"/>
</dbReference>
<dbReference type="Pfam" id="PF00013">
    <property type="entry name" value="KH_1"/>
    <property type="match status" value="1"/>
</dbReference>
<dbReference type="Pfam" id="PF03726">
    <property type="entry name" value="PNPase"/>
    <property type="match status" value="1"/>
</dbReference>
<dbReference type="Pfam" id="PF01138">
    <property type="entry name" value="RNase_PH"/>
    <property type="match status" value="2"/>
</dbReference>
<dbReference type="Pfam" id="PF03725">
    <property type="entry name" value="RNase_PH_C"/>
    <property type="match status" value="2"/>
</dbReference>
<dbReference type="Pfam" id="PF00575">
    <property type="entry name" value="S1"/>
    <property type="match status" value="1"/>
</dbReference>
<dbReference type="PIRSF" id="PIRSF005499">
    <property type="entry name" value="PNPase"/>
    <property type="match status" value="1"/>
</dbReference>
<dbReference type="SMART" id="SM00322">
    <property type="entry name" value="KH"/>
    <property type="match status" value="1"/>
</dbReference>
<dbReference type="SMART" id="SM00316">
    <property type="entry name" value="S1"/>
    <property type="match status" value="1"/>
</dbReference>
<dbReference type="SUPFAM" id="SSF54791">
    <property type="entry name" value="Eukaryotic type KH-domain (KH-domain type I)"/>
    <property type="match status" value="1"/>
</dbReference>
<dbReference type="SUPFAM" id="SSF50249">
    <property type="entry name" value="Nucleic acid-binding proteins"/>
    <property type="match status" value="1"/>
</dbReference>
<dbReference type="SUPFAM" id="SSF55666">
    <property type="entry name" value="Ribonuclease PH domain 2-like"/>
    <property type="match status" value="2"/>
</dbReference>
<dbReference type="SUPFAM" id="SSF54211">
    <property type="entry name" value="Ribosomal protein S5 domain 2-like"/>
    <property type="match status" value="2"/>
</dbReference>
<dbReference type="PROSITE" id="PS50084">
    <property type="entry name" value="KH_TYPE_1"/>
    <property type="match status" value="1"/>
</dbReference>
<dbReference type="PROSITE" id="PS50126">
    <property type="entry name" value="S1"/>
    <property type="match status" value="1"/>
</dbReference>
<gene>
    <name evidence="1" type="primary">pnp</name>
    <name type="ordered locus">Daro_2448</name>
</gene>
<proteinExistence type="inferred from homology"/>
<comment type="function">
    <text evidence="1">Involved in mRNA degradation. Catalyzes the phosphorolysis of single-stranded polyribonucleotides processively in the 3'- to 5'-direction.</text>
</comment>
<comment type="catalytic activity">
    <reaction evidence="1">
        <text>RNA(n+1) + phosphate = RNA(n) + a ribonucleoside 5'-diphosphate</text>
        <dbReference type="Rhea" id="RHEA:22096"/>
        <dbReference type="Rhea" id="RHEA-COMP:14527"/>
        <dbReference type="Rhea" id="RHEA-COMP:17342"/>
        <dbReference type="ChEBI" id="CHEBI:43474"/>
        <dbReference type="ChEBI" id="CHEBI:57930"/>
        <dbReference type="ChEBI" id="CHEBI:140395"/>
        <dbReference type="EC" id="2.7.7.8"/>
    </reaction>
</comment>
<comment type="cofactor">
    <cofactor evidence="1">
        <name>Mg(2+)</name>
        <dbReference type="ChEBI" id="CHEBI:18420"/>
    </cofactor>
</comment>
<comment type="subcellular location">
    <subcellularLocation>
        <location evidence="1">Cytoplasm</location>
    </subcellularLocation>
</comment>
<comment type="similarity">
    <text evidence="1">Belongs to the polyribonucleotide nucleotidyltransferase family.</text>
</comment>
<accession>Q47D98</accession>
<keyword id="KW-0963">Cytoplasm</keyword>
<keyword id="KW-0460">Magnesium</keyword>
<keyword id="KW-0479">Metal-binding</keyword>
<keyword id="KW-0548">Nucleotidyltransferase</keyword>
<keyword id="KW-0694">RNA-binding</keyword>
<keyword id="KW-0808">Transferase</keyword>
<sequence>MFNVVKKTFAYGDHQVTIETGEVARQAGGAVLVSMEETVVLVTVVAAKNAKPGQDFFPLTVDYQEKTYAAGRIPGGFFKREGRPSEKETLTCRLIDRPIRPLFPDGFYNEVQVIATVMSLNPEIDSDIPALIGASAALAISGVPFNGPIGAARVGYIDGQYVLCPTLSQLKGSQLDLVVAGTEAAVLMVESEADQLSEEVMLGAVVFGHTEMQKAINAINELVEEAGKPEWEWEAAPKDEALVASLSALVSAKLEEAYNITVKQTRSQAVKAIRAEAVAALCTGAEGAPDENTVGNLFHEIEASIVRGRILSGAPRIDGRDTRTVRPITMRSGVLPRTHGSALFTRGETQALAVATLGTNRDEQIIDALAGEYRDRFMLHYNMPPYATGECGRVGTPKRREIGHGRLAKRALLAVLPKPEDFSYSMRLVSEITESNGSSSMASVCGGCLALLDAGVPLKAHVAGIAMGLIKDGNRFAVLTDILGDEDHLGDMDFKVAGSTTGITALQMDIKIQGITKEIMQVALAQAKEARIHILNLMQESAAGPREEMSAYAPRLYTFKINPEKIRDVIGKGGAVIRALTEETGTTIDIQDDGTITIAATSGEAAAAARSRIDAITAEVEIGKIYEGTVLKILDFGAIVSVLPGKDGLLHISQIAQERVNKVEDYVKEGQIVRVKVLETDDRGRVKLSMKAAAADEGTVAQPVAAPEAAVQQQQ</sequence>
<reference key="1">
    <citation type="journal article" date="2009" name="BMC Genomics">
        <title>Metabolic analysis of the soil microbe Dechloromonas aromatica str. RCB: indications of a surprisingly complex life-style and cryptic anaerobic pathways for aromatic degradation.</title>
        <authorList>
            <person name="Salinero K.K."/>
            <person name="Keller K."/>
            <person name="Feil W.S."/>
            <person name="Feil H."/>
            <person name="Trong S."/>
            <person name="Di Bartolo G."/>
            <person name="Lapidus A."/>
        </authorList>
    </citation>
    <scope>NUCLEOTIDE SEQUENCE [LARGE SCALE GENOMIC DNA]</scope>
    <source>
        <strain>RCB</strain>
    </source>
</reference>
<protein>
    <recommendedName>
        <fullName evidence="1">Polyribonucleotide nucleotidyltransferase</fullName>
        <ecNumber evidence="1">2.7.7.8</ecNumber>
    </recommendedName>
    <alternativeName>
        <fullName evidence="1">Polynucleotide phosphorylase</fullName>
        <shortName evidence="1">PNPase</shortName>
    </alternativeName>
</protein>
<organism>
    <name type="scientific">Dechloromonas aromatica (strain RCB)</name>
    <dbReference type="NCBI Taxonomy" id="159087"/>
    <lineage>
        <taxon>Bacteria</taxon>
        <taxon>Pseudomonadati</taxon>
        <taxon>Pseudomonadota</taxon>
        <taxon>Betaproteobacteria</taxon>
        <taxon>Rhodocyclales</taxon>
        <taxon>Azonexaceae</taxon>
        <taxon>Dechloromonas</taxon>
    </lineage>
</organism>